<proteinExistence type="inferred from homology"/>
<gene>
    <name evidence="1" type="primary">hutH</name>
    <name type="ordered locus">SAS0008</name>
</gene>
<protein>
    <recommendedName>
        <fullName evidence="1">Histidine ammonia-lyase</fullName>
        <shortName evidence="1">Histidase</shortName>
        <ecNumber evidence="1">4.3.1.3</ecNumber>
    </recommendedName>
</protein>
<reference key="1">
    <citation type="journal article" date="2004" name="Proc. Natl. Acad. Sci. U.S.A.">
        <title>Complete genomes of two clinical Staphylococcus aureus strains: evidence for the rapid evolution of virulence and drug resistance.</title>
        <authorList>
            <person name="Holden M.T.G."/>
            <person name="Feil E.J."/>
            <person name="Lindsay J.A."/>
            <person name="Peacock S.J."/>
            <person name="Day N.P.J."/>
            <person name="Enright M.C."/>
            <person name="Foster T.J."/>
            <person name="Moore C.E."/>
            <person name="Hurst L."/>
            <person name="Atkin R."/>
            <person name="Barron A."/>
            <person name="Bason N."/>
            <person name="Bentley S.D."/>
            <person name="Chillingworth C."/>
            <person name="Chillingworth T."/>
            <person name="Churcher C."/>
            <person name="Clark L."/>
            <person name="Corton C."/>
            <person name="Cronin A."/>
            <person name="Doggett J."/>
            <person name="Dowd L."/>
            <person name="Feltwell T."/>
            <person name="Hance Z."/>
            <person name="Harris B."/>
            <person name="Hauser H."/>
            <person name="Holroyd S."/>
            <person name="Jagels K."/>
            <person name="James K.D."/>
            <person name="Lennard N."/>
            <person name="Line A."/>
            <person name="Mayes R."/>
            <person name="Moule S."/>
            <person name="Mungall K."/>
            <person name="Ormond D."/>
            <person name="Quail M.A."/>
            <person name="Rabbinowitsch E."/>
            <person name="Rutherford K.M."/>
            <person name="Sanders M."/>
            <person name="Sharp S."/>
            <person name="Simmonds M."/>
            <person name="Stevens K."/>
            <person name="Whitehead S."/>
            <person name="Barrell B.G."/>
            <person name="Spratt B.G."/>
            <person name="Parkhill J."/>
        </authorList>
    </citation>
    <scope>NUCLEOTIDE SEQUENCE [LARGE SCALE GENOMIC DNA]</scope>
    <source>
        <strain>MSSA476</strain>
    </source>
</reference>
<comment type="catalytic activity">
    <reaction evidence="1">
        <text>L-histidine = trans-urocanate + NH4(+)</text>
        <dbReference type="Rhea" id="RHEA:21232"/>
        <dbReference type="ChEBI" id="CHEBI:17771"/>
        <dbReference type="ChEBI" id="CHEBI:28938"/>
        <dbReference type="ChEBI" id="CHEBI:57595"/>
        <dbReference type="EC" id="4.3.1.3"/>
    </reaction>
</comment>
<comment type="pathway">
    <text evidence="1">Amino-acid degradation; L-histidine degradation into L-glutamate; N-formimidoyl-L-glutamate from L-histidine: step 1/3.</text>
</comment>
<comment type="subcellular location">
    <subcellularLocation>
        <location evidence="1">Cytoplasm</location>
    </subcellularLocation>
</comment>
<comment type="PTM">
    <text evidence="1">Contains an active site 4-methylidene-imidazol-5-one (MIO), which is formed autocatalytically by cyclization and dehydration of residues Ala-Ser-Gly.</text>
</comment>
<comment type="similarity">
    <text evidence="1">Belongs to the PAL/histidase family.</text>
</comment>
<organism>
    <name type="scientific">Staphylococcus aureus (strain MSSA476)</name>
    <dbReference type="NCBI Taxonomy" id="282459"/>
    <lineage>
        <taxon>Bacteria</taxon>
        <taxon>Bacillati</taxon>
        <taxon>Bacillota</taxon>
        <taxon>Bacilli</taxon>
        <taxon>Bacillales</taxon>
        <taxon>Staphylococcaceae</taxon>
        <taxon>Staphylococcus</taxon>
    </lineage>
</organism>
<accession>Q6GD82</accession>
<keyword id="KW-0963">Cytoplasm</keyword>
<keyword id="KW-0369">Histidine metabolism</keyword>
<keyword id="KW-0456">Lyase</keyword>
<feature type="chain" id="PRO_0000161033" description="Histidine ammonia-lyase">
    <location>
        <begin position="1"/>
        <end position="504"/>
    </location>
</feature>
<feature type="modified residue" description="2,3-didehydroalanine (Ser)" evidence="1">
    <location>
        <position position="143"/>
    </location>
</feature>
<feature type="cross-link" description="5-imidazolinone (Ala-Gly)" evidence="1">
    <location>
        <begin position="142"/>
        <end position="144"/>
    </location>
</feature>
<name>HUTH_STAAS</name>
<dbReference type="EC" id="4.3.1.3" evidence="1"/>
<dbReference type="EMBL" id="BX571857">
    <property type="protein sequence ID" value="CAG41780.1"/>
    <property type="molecule type" value="Genomic_DNA"/>
</dbReference>
<dbReference type="RefSeq" id="WP_000177468.1">
    <property type="nucleotide sequence ID" value="NC_002953.3"/>
</dbReference>
<dbReference type="SMR" id="Q6GD82"/>
<dbReference type="KEGG" id="sas:SAS0008"/>
<dbReference type="HOGENOM" id="CLU_014801_4_0_9"/>
<dbReference type="UniPathway" id="UPA00379">
    <property type="reaction ID" value="UER00549"/>
</dbReference>
<dbReference type="GO" id="GO:0005737">
    <property type="term" value="C:cytoplasm"/>
    <property type="evidence" value="ECO:0007669"/>
    <property type="project" value="UniProtKB-SubCell"/>
</dbReference>
<dbReference type="GO" id="GO:0004397">
    <property type="term" value="F:histidine ammonia-lyase activity"/>
    <property type="evidence" value="ECO:0007669"/>
    <property type="project" value="UniProtKB-UniRule"/>
</dbReference>
<dbReference type="GO" id="GO:0019556">
    <property type="term" value="P:L-histidine catabolic process to glutamate and formamide"/>
    <property type="evidence" value="ECO:0007669"/>
    <property type="project" value="UniProtKB-UniPathway"/>
</dbReference>
<dbReference type="GO" id="GO:0019557">
    <property type="term" value="P:L-histidine catabolic process to glutamate and formate"/>
    <property type="evidence" value="ECO:0007669"/>
    <property type="project" value="UniProtKB-UniPathway"/>
</dbReference>
<dbReference type="CDD" id="cd00332">
    <property type="entry name" value="PAL-HAL"/>
    <property type="match status" value="1"/>
</dbReference>
<dbReference type="FunFam" id="1.10.275.10:FF:000008">
    <property type="entry name" value="Histidine ammonia-lyase"/>
    <property type="match status" value="1"/>
</dbReference>
<dbReference type="FunFam" id="1.20.200.10:FF:000003">
    <property type="entry name" value="Histidine ammonia-lyase"/>
    <property type="match status" value="1"/>
</dbReference>
<dbReference type="Gene3D" id="1.20.200.10">
    <property type="entry name" value="Fumarase/aspartase (Central domain)"/>
    <property type="match status" value="1"/>
</dbReference>
<dbReference type="Gene3D" id="1.10.275.10">
    <property type="entry name" value="Fumarase/aspartase (N-terminal domain)"/>
    <property type="match status" value="1"/>
</dbReference>
<dbReference type="HAMAP" id="MF_00229">
    <property type="entry name" value="His_ammonia_lyase"/>
    <property type="match status" value="1"/>
</dbReference>
<dbReference type="InterPro" id="IPR001106">
    <property type="entry name" value="Aromatic_Lyase"/>
</dbReference>
<dbReference type="InterPro" id="IPR024083">
    <property type="entry name" value="Fumarase/histidase_N"/>
</dbReference>
<dbReference type="InterPro" id="IPR005921">
    <property type="entry name" value="HutH"/>
</dbReference>
<dbReference type="InterPro" id="IPR008948">
    <property type="entry name" value="L-Aspartase-like"/>
</dbReference>
<dbReference type="InterPro" id="IPR022313">
    <property type="entry name" value="Phe/His_NH3-lyase_AS"/>
</dbReference>
<dbReference type="NCBIfam" id="TIGR01225">
    <property type="entry name" value="hutH"/>
    <property type="match status" value="1"/>
</dbReference>
<dbReference type="NCBIfam" id="NF006871">
    <property type="entry name" value="PRK09367.1"/>
    <property type="match status" value="1"/>
</dbReference>
<dbReference type="PANTHER" id="PTHR10362">
    <property type="entry name" value="HISTIDINE AMMONIA-LYASE"/>
    <property type="match status" value="1"/>
</dbReference>
<dbReference type="Pfam" id="PF00221">
    <property type="entry name" value="Lyase_aromatic"/>
    <property type="match status" value="1"/>
</dbReference>
<dbReference type="SUPFAM" id="SSF48557">
    <property type="entry name" value="L-aspartase-like"/>
    <property type="match status" value="1"/>
</dbReference>
<dbReference type="PROSITE" id="PS00488">
    <property type="entry name" value="PAL_HISTIDASE"/>
    <property type="match status" value="1"/>
</dbReference>
<evidence type="ECO:0000255" key="1">
    <source>
        <dbReference type="HAMAP-Rule" id="MF_00229"/>
    </source>
</evidence>
<sequence>MTLYLDGETLTIEDIKSFLQQQSKIEIIDDALERVKKSRAVVERIIENEETVYGITTGFGLFSDVRIDPTQYNELQVNLIRSHACGLGEPFSKEVALVMMILRLNTLLKGHSGATLELVRQLQFFINERIIPIIPQQGSLGASGDLAPLSHLALALIGEGKVLYRGEEKDSDDVLRELNRQPLNLQAKEGLALINGTQAMTAQGVISYIESEDLGYQSEWIAALTHQSLNGIIDAYRHDVHAVRNFQEQINVAARMRDWLEGSTLTTRQAEIRVQDAYTLRCIPQIHGASFQVFNYVKQQLEFEMNAANDNPLIFEEANETFVISGGNFHGQPIAFALDHLKLGVSELANVSERRLERLVNPQLNGDLPAFLSPEPGLQSGAMIMQYAAASLVSENKTLAHPASVDSITSSANQEDHVSMGTTAARHGYQIIENARRVLAIECVIALQAAELKGVEGLSPKTRRKYEEFRSIVPSITHDRQFHKDIEAVAQYLKQSIYQTTACH</sequence>